<organism>
    <name type="scientific">Arabidopsis thaliana</name>
    <name type="common">Mouse-ear cress</name>
    <dbReference type="NCBI Taxonomy" id="3702"/>
    <lineage>
        <taxon>Eukaryota</taxon>
        <taxon>Viridiplantae</taxon>
        <taxon>Streptophyta</taxon>
        <taxon>Embryophyta</taxon>
        <taxon>Tracheophyta</taxon>
        <taxon>Spermatophyta</taxon>
        <taxon>Magnoliopsida</taxon>
        <taxon>eudicotyledons</taxon>
        <taxon>Gunneridae</taxon>
        <taxon>Pentapetalae</taxon>
        <taxon>rosids</taxon>
        <taxon>malvids</taxon>
        <taxon>Brassicales</taxon>
        <taxon>Brassicaceae</taxon>
        <taxon>Camelineae</taxon>
        <taxon>Arabidopsis</taxon>
    </lineage>
</organism>
<feature type="signal peptide" evidence="1">
    <location>
        <begin position="1"/>
        <end status="unknown"/>
    </location>
</feature>
<feature type="chain" id="PRO_0000439575" description="S-protein homolog 28">
    <location>
        <begin status="unknown"/>
        <end position="150"/>
    </location>
</feature>
<feature type="glycosylation site" description="N-linked (GlcNAc...) asparagine" evidence="2">
    <location>
        <position position="122"/>
    </location>
</feature>
<reference key="1">
    <citation type="journal article" date="1999" name="DNA Res.">
        <title>Structural analysis of Arabidopsis thaliana chromosome 5. IX. Sequence features of the regions of 1,011,550 bp covered by seventeen P1 and TAC clones.</title>
        <authorList>
            <person name="Kaneko T."/>
            <person name="Katoh T."/>
            <person name="Sato S."/>
            <person name="Nakamura Y."/>
            <person name="Asamizu E."/>
            <person name="Kotani H."/>
            <person name="Miyajima N."/>
            <person name="Tabata S."/>
        </authorList>
    </citation>
    <scope>NUCLEOTIDE SEQUENCE [LARGE SCALE GENOMIC DNA]</scope>
    <source>
        <strain>cv. Columbia</strain>
    </source>
</reference>
<reference key="2">
    <citation type="journal article" date="2017" name="Plant J.">
        <title>Araport11: a complete reannotation of the Arabidopsis thaliana reference genome.</title>
        <authorList>
            <person name="Cheng C.Y."/>
            <person name="Krishnakumar V."/>
            <person name="Chan A.P."/>
            <person name="Thibaud-Nissen F."/>
            <person name="Schobel S."/>
            <person name="Town C.D."/>
        </authorList>
    </citation>
    <scope>GENOME REANNOTATION</scope>
    <source>
        <strain>cv. Columbia</strain>
    </source>
</reference>
<reference key="3">
    <citation type="journal article" date="1999" name="Plant Mol. Biol.">
        <title>Analysis of Arabidopsis genome sequence reveals a large new gene family in plants.</title>
        <authorList>
            <person name="Ride J.P."/>
            <person name="Davies E.M."/>
            <person name="Franklin F.C.H."/>
            <person name="Marshall D.F."/>
        </authorList>
    </citation>
    <scope>GENE FAMILY</scope>
    <scope>NOMENCLATURE</scope>
    <source>
        <strain>cv. Columbia</strain>
    </source>
</reference>
<comment type="subcellular location">
    <subcellularLocation>
        <location evidence="5">Secreted</location>
    </subcellularLocation>
</comment>
<comment type="similarity">
    <text evidence="4">Belongs to the plant self-incompatibility (S1) protein family.</text>
</comment>
<sequence>MINSSKINLYSYVCSIFIMSIVVISLICSEALQIQQAKEPFRGHLTRVTIQNYNDYLLAIHCKSRDDDLGFHILAKGELFGWKFHVNFRYSTLCFCGFSQRQINKGVFIIYVASRDFYRCANCTWKAEKDGFHGYGDIPTRGYLFYNWLN</sequence>
<name>SPH28_ARATH</name>
<keyword id="KW-0325">Glycoprotein</keyword>
<keyword id="KW-1185">Reference proteome</keyword>
<keyword id="KW-0964">Secreted</keyword>
<keyword id="KW-0713">Self-incompatibility</keyword>
<keyword id="KW-0732">Signal</keyword>
<proteinExistence type="inferred from homology"/>
<protein>
    <recommendedName>
        <fullName evidence="3">S-protein homolog 28</fullName>
    </recommendedName>
</protein>
<evidence type="ECO:0000255" key="1"/>
<evidence type="ECO:0000255" key="2">
    <source>
        <dbReference type="PROSITE-ProRule" id="PRU00498"/>
    </source>
</evidence>
<evidence type="ECO:0000303" key="3">
    <source>
    </source>
</evidence>
<evidence type="ECO:0000305" key="4"/>
<evidence type="ECO:0000305" key="5">
    <source>
    </source>
</evidence>
<evidence type="ECO:0000312" key="6">
    <source>
        <dbReference type="Araport" id="AT5G06030"/>
    </source>
</evidence>
<evidence type="ECO:0000312" key="7">
    <source>
        <dbReference type="EMBL" id="BAB10808.1"/>
    </source>
</evidence>
<accession>Q9FI83</accession>
<dbReference type="EMBL" id="AB017060">
    <property type="protein sequence ID" value="BAB10808.1"/>
    <property type="molecule type" value="Genomic_DNA"/>
</dbReference>
<dbReference type="EMBL" id="CP002688">
    <property type="protein sequence ID" value="AED90956.1"/>
    <property type="molecule type" value="Genomic_DNA"/>
</dbReference>
<dbReference type="RefSeq" id="NP_196222.1">
    <property type="nucleotide sequence ID" value="NM_120685.1"/>
</dbReference>
<dbReference type="GlyCosmos" id="Q9FI83">
    <property type="glycosylation" value="1 site, No reported glycans"/>
</dbReference>
<dbReference type="GlyGen" id="Q9FI83">
    <property type="glycosylation" value="1 site"/>
</dbReference>
<dbReference type="PaxDb" id="3702-AT5G06030.1"/>
<dbReference type="EnsemblPlants" id="AT5G06030.1">
    <property type="protein sequence ID" value="AT5G06030.1"/>
    <property type="gene ID" value="AT5G06030"/>
</dbReference>
<dbReference type="GeneID" id="830490"/>
<dbReference type="Gramene" id="AT5G06030.1">
    <property type="protein sequence ID" value="AT5G06030.1"/>
    <property type="gene ID" value="AT5G06030"/>
</dbReference>
<dbReference type="KEGG" id="ath:AT5G06030"/>
<dbReference type="Araport" id="AT5G06030"/>
<dbReference type="TAIR" id="AT5G06030"/>
<dbReference type="HOGENOM" id="CLU_125658_0_1_1"/>
<dbReference type="InParanoid" id="Q9FI83"/>
<dbReference type="OMA" id="RCANCTW"/>
<dbReference type="PhylomeDB" id="Q9FI83"/>
<dbReference type="PRO" id="PR:Q9FI83"/>
<dbReference type="Proteomes" id="UP000006548">
    <property type="component" value="Chromosome 5"/>
</dbReference>
<dbReference type="ExpressionAtlas" id="Q9FI83">
    <property type="expression patterns" value="baseline and differential"/>
</dbReference>
<dbReference type="GO" id="GO:0005576">
    <property type="term" value="C:extracellular region"/>
    <property type="evidence" value="ECO:0007669"/>
    <property type="project" value="UniProtKB-SubCell"/>
</dbReference>
<dbReference type="GO" id="GO:0060320">
    <property type="term" value="P:rejection of self pollen"/>
    <property type="evidence" value="ECO:0007669"/>
    <property type="project" value="UniProtKB-KW"/>
</dbReference>
<dbReference type="InterPro" id="IPR010264">
    <property type="entry name" value="Self-incomp_S1"/>
</dbReference>
<dbReference type="PANTHER" id="PTHR31232">
    <property type="match status" value="1"/>
</dbReference>
<dbReference type="PANTHER" id="PTHR31232:SF168">
    <property type="entry name" value="S-PROTEIN HOMOLOG 24-RELATED"/>
    <property type="match status" value="1"/>
</dbReference>
<dbReference type="Pfam" id="PF05938">
    <property type="entry name" value="Self-incomp_S1"/>
    <property type="match status" value="1"/>
</dbReference>
<gene>
    <name evidence="3" type="primary">SPH28</name>
    <name evidence="6" type="ordered locus">At5g06030</name>
    <name evidence="7" type="ORF">K18J17.23</name>
</gene>